<gene>
    <name type="primary">CALS2</name>
    <name type="synonym">GSL3</name>
    <name type="ordered locus">At2g31960</name>
    <name type="ORF">F22D22.29</name>
</gene>
<sequence length="1950" mass="226019">MAQRKGPDPPPPQRRILRTQTAGNLGEAMLDSEVVPSSLVEIAPILRVANEVEASNPRVAYLCRFYAFEKAHRLDPTSSGRGVRQFKTALLQRLERENETTLAGRQKSDAREMQSFYQHYYKKYIQALQNAADKADRAQLTKAYQTAAVLFEVLKAVNQTEDVEVADEILEAHTKVEEKSQIYVPYNILPLDPDSQNQAIMRFPEIQATVSALRNTRGLPWPAGHKKKLDEDMLDWLQTMFGFQKDNVSNQREHLILLLANVHIRQFPRPEQQPRLDDRALTIVMKKLFKNYKKWCKYLGRKSSLWLPTIQQEVQQRKLLYMGLYLLIWGEAANLRFLPECLCYIYHHMAFELYGMLAGSVSPMTGEHVKPAYGGEDEAFLQKVVTPIYKTIAKEAKRSRGGKSKHSEWRNYDDLNEYFWSIRCFRLGWPMRADADFFCQTAEELRLDRSENKPKTGDRWMGKVNFVEIRSFWHIFRSFDRMWSFYILSLQAMIIIAWNGSGKLSGIFQGDVFLKVLSIFITAAILKLAQAVLDIALSWKSRHSMSFHVKLRFIFKAVAAAIWVVLMPLTYAYSWKTPSGFAETIKNWFGGHQNSSPSFFIIVILIYLSPNMLSTLLFAFPFIRRYLERSDYKIVMLMMWWSQPRLYIGRGMHESALSLFKYTMFWVVLLISKLAFSFYAEIKPLVKPTKDIMRVHISVYRWHEFFPHAKSNMGVVIALWSPVILVYFMDTQIWYAIVSTLVGGLNGAFRRLGEIRTLGMLRSRFQSLPEAFNACLVPNEKSETPKKKGIMATFTRKFDQVPSSKDKEAARFAQMWNKIISSFREEDLISDREMELLLVPYWADRDLDLIRWPPFLLASKIPIALDMAKDSNGKDRELTKRLSVDSYMTCAVRECYASFKNLINFLVVGEREGQVINEIFSRIDEHIEKETLIKDLNLSALPDLYGQFVRLIEYLMENREEDKDQIVIVLLNMLEVVTRDIMDEEVPSMLESTHNGTYVKYDVMTPLHQQRKYFSQLRFPVYSQTEAWKEKIKRLHLLLTVKESAMDVPSNLEARRRLTFFSNSLFMEMPDAPKIRNMLSFSVLTPYYSEDVLFSIFGLEKQNEDGVSILFYLQKIFPDEWTNFLERVKCGSEEELRAREELEEELRLWASYRGQTLTKTVRGMMYYRKALELQAFLDMAKDEELMKGYKALELTSEDASKSGTSLWAQCQALADMKFTFVVSCQQYSVQKRSGDQRAKDILRLMTTYPSLRVAYIDEVEQTHKESYKGADEKIYYSALVKAAPQTKSMDSSESVQTLDQVIYRIKLPGPAILGEGKPENQNHSIIFTRGEGLQTIDMNQDNYMEEAFKMRNLLQEFLVKHGGVRTPTILGLREHIFTGSVSSLAWFMSNQENSFVTIGQRVLASPLKVRFHYGHPDVFDRLFHLTRGGVCKASKVINLSEDIFAGFNSTLREGNVTHHEYIQVGKGRDVGLNQISMFEAKIANGNGEQTLSRDLYRLGHRFDFFRMLSCYFTTIGFYFSTMLTVLTVYVFLYGRLYLVLSGLEEGLSNQKAFRSNMPLQAALASQSFVQIGFLMALPMMMEIGLERGFHNALIDFVLMQLQLASVFFTFQLGTKTHYYGRTLFHGGAEYRGTGRGFVVFHAKFAENYRFYSRSHFVKGIELMILLLVYQIFGHAYRGVVTYILITVSIWFMVVTWLFAPFLFNPSGFEWQKIVDDWTDWNKWIYNRGGIGVPPEKSWESWWEKEIGHLRHSGKRGIILEIVLALRFFIFQYGLVYQLSTFKQENQSLWIYGASWFVILFILLIVKGLGVGRQRFSTNFQLLFRIIKGFVFLTFLGLLITFLALRFLTPKDIFLCMLAFMPTGWGMLLIAQACKPLIQRLGFWSSVRTLARGYEILMGLLLFTPVAFLAWFPFVSEFQTRMLFNQAFSRGLQISRILGGQRKDRSSKNKE</sequence>
<reference key="1">
    <citation type="journal article" date="1999" name="Nature">
        <title>Sequence and analysis of chromosome 2 of the plant Arabidopsis thaliana.</title>
        <authorList>
            <person name="Lin X."/>
            <person name="Kaul S."/>
            <person name="Rounsley S.D."/>
            <person name="Shea T.P."/>
            <person name="Benito M.-I."/>
            <person name="Town C.D."/>
            <person name="Fujii C.Y."/>
            <person name="Mason T.M."/>
            <person name="Bowman C.L."/>
            <person name="Barnstead M.E."/>
            <person name="Feldblyum T.V."/>
            <person name="Buell C.R."/>
            <person name="Ketchum K.A."/>
            <person name="Lee J.J."/>
            <person name="Ronning C.M."/>
            <person name="Koo H.L."/>
            <person name="Moffat K.S."/>
            <person name="Cronin L.A."/>
            <person name="Shen M."/>
            <person name="Pai G."/>
            <person name="Van Aken S."/>
            <person name="Umayam L."/>
            <person name="Tallon L.J."/>
            <person name="Gill J.E."/>
            <person name="Adams M.D."/>
            <person name="Carrera A.J."/>
            <person name="Creasy T.H."/>
            <person name="Goodman H.M."/>
            <person name="Somerville C.R."/>
            <person name="Copenhaver G.P."/>
            <person name="Preuss D."/>
            <person name="Nierman W.C."/>
            <person name="White O."/>
            <person name="Eisen J.A."/>
            <person name="Salzberg S.L."/>
            <person name="Fraser C.M."/>
            <person name="Venter J.C."/>
        </authorList>
    </citation>
    <scope>NUCLEOTIDE SEQUENCE [LARGE SCALE GENOMIC DNA]</scope>
    <source>
        <strain>cv. Columbia</strain>
    </source>
</reference>
<reference key="2">
    <citation type="journal article" date="2017" name="Plant J.">
        <title>Araport11: a complete reannotation of the Arabidopsis thaliana reference genome.</title>
        <authorList>
            <person name="Cheng C.Y."/>
            <person name="Krishnakumar V."/>
            <person name="Chan A.P."/>
            <person name="Thibaud-Nissen F."/>
            <person name="Schobel S."/>
            <person name="Town C.D."/>
        </authorList>
    </citation>
    <scope>GENOME REANNOTATION</scope>
    <source>
        <strain>cv. Columbia</strain>
    </source>
</reference>
<reference key="3">
    <citation type="journal article" date="2002" name="Science">
        <title>Functional annotation of a full-length Arabidopsis cDNA collection.</title>
        <authorList>
            <person name="Seki M."/>
            <person name="Narusaka M."/>
            <person name="Kamiya A."/>
            <person name="Ishida J."/>
            <person name="Satou M."/>
            <person name="Sakurai T."/>
            <person name="Nakajima M."/>
            <person name="Enju A."/>
            <person name="Akiyama K."/>
            <person name="Oono Y."/>
            <person name="Muramatsu M."/>
            <person name="Hayashizaki Y."/>
            <person name="Kawai J."/>
            <person name="Carninci P."/>
            <person name="Itoh M."/>
            <person name="Ishii Y."/>
            <person name="Arakawa T."/>
            <person name="Shibata K."/>
            <person name="Shinagawa A."/>
            <person name="Shinozaki K."/>
        </authorList>
    </citation>
    <scope>NUCLEOTIDE SEQUENCE [LARGE SCALE MRNA] OF 1204-1950</scope>
    <source>
        <strain>cv. Columbia</strain>
    </source>
</reference>
<reference key="4">
    <citation type="journal article" date="2001" name="Plant Cell">
        <title>A cell plate-specific callose synthase and its interaction with phragmoplastin.</title>
        <authorList>
            <person name="Hong Z."/>
            <person name="Delauney A.J."/>
            <person name="Verma D.P.S."/>
        </authorList>
    </citation>
    <scope>GENE FAMILY</scope>
    <scope>NOMENCLATURE</scope>
</reference>
<reference key="5">
    <citation type="journal article" date="2005" name="Plant Mol. Biol.">
        <title>Two callose synthases, GSL1 and GSL5, play an essential and redundant role in plant and pollen development and in fertility.</title>
        <authorList>
            <person name="Enns L.C."/>
            <person name="Kanaoka M.M."/>
            <person name="Torii K.U."/>
            <person name="Comai L."/>
            <person name="Okada K."/>
            <person name="Cleland R.E."/>
        </authorList>
    </citation>
    <scope>NOMENCLATURE</scope>
</reference>
<feature type="chain" id="PRO_0000334574" description="Callose synthase 2">
    <location>
        <begin position="1"/>
        <end position="1950"/>
    </location>
</feature>
<feature type="topological domain" description="Cytoplasmic" evidence="2">
    <location>
        <begin position="1"/>
        <end position="481"/>
    </location>
</feature>
<feature type="transmembrane region" description="Helical" evidence="2">
    <location>
        <begin position="482"/>
        <end position="502"/>
    </location>
</feature>
<feature type="topological domain" description="Extracellular" evidence="2">
    <location>
        <begin position="503"/>
        <end position="505"/>
    </location>
</feature>
<feature type="transmembrane region" description="Helical" evidence="2">
    <location>
        <begin position="506"/>
        <end position="526"/>
    </location>
</feature>
<feature type="topological domain" description="Cytoplasmic" evidence="2">
    <location>
        <begin position="527"/>
        <end position="552"/>
    </location>
</feature>
<feature type="transmembrane region" description="Helical" evidence="2">
    <location>
        <begin position="553"/>
        <end position="573"/>
    </location>
</feature>
<feature type="topological domain" description="Extracellular" evidence="2">
    <location>
        <begin position="574"/>
        <end position="598"/>
    </location>
</feature>
<feature type="transmembrane region" description="Helical" evidence="2">
    <location>
        <begin position="599"/>
        <end position="619"/>
    </location>
</feature>
<feature type="topological domain" description="Cytoplasmic" evidence="2">
    <location>
        <begin position="620"/>
        <end position="655"/>
    </location>
</feature>
<feature type="transmembrane region" description="Helical" evidence="2">
    <location>
        <begin position="656"/>
        <end position="676"/>
    </location>
</feature>
<feature type="topological domain" description="Extracellular" evidence="2">
    <location>
        <begin position="677"/>
        <end position="713"/>
    </location>
</feature>
<feature type="transmembrane region" description="Helical" evidence="2">
    <location>
        <begin position="714"/>
        <end position="734"/>
    </location>
</feature>
<feature type="topological domain" description="Cytoplasmic" evidence="2">
    <location>
        <begin position="735"/>
        <end position="1511"/>
    </location>
</feature>
<feature type="transmembrane region" description="Helical" evidence="2">
    <location>
        <begin position="1512"/>
        <end position="1532"/>
    </location>
</feature>
<feature type="topological domain" description="Extracellular" evidence="2">
    <location>
        <begin position="1533"/>
        <end position="1560"/>
    </location>
</feature>
<feature type="transmembrane region" description="Helical" evidence="2">
    <location>
        <begin position="1561"/>
        <end position="1581"/>
    </location>
</feature>
<feature type="topological domain" description="Cytoplasmic" evidence="2">
    <location>
        <begin position="1582"/>
        <end position="1591"/>
    </location>
</feature>
<feature type="transmembrane region" description="Helical" evidence="2">
    <location>
        <begin position="1592"/>
        <end position="1612"/>
    </location>
</feature>
<feature type="topological domain" description="Extracellular" evidence="2">
    <location>
        <begin position="1613"/>
        <end position="1655"/>
    </location>
</feature>
<feature type="transmembrane region" description="Helical" evidence="2">
    <location>
        <begin position="1656"/>
        <end position="1676"/>
    </location>
</feature>
<feature type="topological domain" description="Cytoplasmic" evidence="2">
    <location>
        <begin position="1677"/>
        <end position="1682"/>
    </location>
</feature>
<feature type="transmembrane region" description="Helical" evidence="2">
    <location>
        <begin position="1683"/>
        <end position="1703"/>
    </location>
</feature>
<feature type="topological domain" description="Extracellular" evidence="2">
    <location>
        <begin position="1704"/>
        <end position="1755"/>
    </location>
</feature>
<feature type="transmembrane region" description="Helical" evidence="2">
    <location>
        <begin position="1756"/>
        <end position="1776"/>
    </location>
</feature>
<feature type="topological domain" description="Cytoplasmic" evidence="2">
    <location>
        <begin position="1777"/>
        <end position="1787"/>
    </location>
</feature>
<feature type="transmembrane region" description="Helical" evidence="2">
    <location>
        <begin position="1788"/>
        <end position="1808"/>
    </location>
</feature>
<feature type="topological domain" description="Extracellular" evidence="2">
    <location>
        <begin position="1809"/>
        <end position="1827"/>
    </location>
</feature>
<feature type="transmembrane region" description="Helical" evidence="2">
    <location>
        <begin position="1828"/>
        <end position="1848"/>
    </location>
</feature>
<feature type="topological domain" description="Cytoplasmic" evidence="2">
    <location>
        <begin position="1849"/>
        <end position="1851"/>
    </location>
</feature>
<feature type="transmembrane region" description="Helical" evidence="2">
    <location>
        <begin position="1852"/>
        <end position="1872"/>
    </location>
</feature>
<feature type="topological domain" description="Extracellular" evidence="2">
    <location>
        <begin position="1873"/>
        <end position="1894"/>
    </location>
</feature>
<feature type="transmembrane region" description="Helical" evidence="2">
    <location>
        <begin position="1895"/>
        <end position="1915"/>
    </location>
</feature>
<feature type="topological domain" description="Cytoplasmic" evidence="2">
    <location>
        <begin position="1916"/>
        <end position="1950"/>
    </location>
</feature>
<evidence type="ECO:0000250" key="1"/>
<evidence type="ECO:0000255" key="2"/>
<evidence type="ECO:0000305" key="3"/>
<comment type="function">
    <text evidence="1">Involved in callose synthesis at the forming cell plate during cytokinesis. During plant growth and development, callose is found as a transitory component of the cell plate in dividing cells, is a major component of pollen mother cell walls and pollen tubes, and is found as a structural component of plasmodesmatal canals (By similarity).</text>
</comment>
<comment type="catalytic activity">
    <reaction>
        <text>[(1-&gt;3)-beta-D-glucosyl](n) + UDP-alpha-D-glucose = [(1-&gt;3)-beta-D-glucosyl](n+1) + UDP + H(+)</text>
        <dbReference type="Rhea" id="RHEA:21476"/>
        <dbReference type="Rhea" id="RHEA-COMP:11146"/>
        <dbReference type="Rhea" id="RHEA-COMP:14303"/>
        <dbReference type="ChEBI" id="CHEBI:15378"/>
        <dbReference type="ChEBI" id="CHEBI:37671"/>
        <dbReference type="ChEBI" id="CHEBI:58223"/>
        <dbReference type="ChEBI" id="CHEBI:58885"/>
        <dbReference type="EC" id="2.4.1.34"/>
    </reaction>
</comment>
<comment type="subcellular location">
    <subcellularLocation>
        <location evidence="3">Cell membrane</location>
        <topology evidence="3">Multi-pass membrane protein</topology>
    </subcellularLocation>
</comment>
<comment type="similarity">
    <text evidence="3">Belongs to the glycosyltransferase 48 family.</text>
</comment>
<comment type="sequence caution" evidence="3">
    <conflict type="erroneous gene model prediction">
        <sequence resource="EMBL-CDS" id="AAD15408"/>
    </conflict>
</comment>
<comment type="sequence caution" evidence="3">
    <conflict type="erroneous initiation">
        <sequence resource="EMBL-CDS" id="BAC42023"/>
    </conflict>
</comment>
<name>CALS2_ARATH</name>
<organism>
    <name type="scientific">Arabidopsis thaliana</name>
    <name type="common">Mouse-ear cress</name>
    <dbReference type="NCBI Taxonomy" id="3702"/>
    <lineage>
        <taxon>Eukaryota</taxon>
        <taxon>Viridiplantae</taxon>
        <taxon>Streptophyta</taxon>
        <taxon>Embryophyta</taxon>
        <taxon>Tracheophyta</taxon>
        <taxon>Spermatophyta</taxon>
        <taxon>Magnoliopsida</taxon>
        <taxon>eudicotyledons</taxon>
        <taxon>Gunneridae</taxon>
        <taxon>Pentapetalae</taxon>
        <taxon>rosids</taxon>
        <taxon>malvids</taxon>
        <taxon>Brassicales</taxon>
        <taxon>Brassicaceae</taxon>
        <taxon>Camelineae</taxon>
        <taxon>Arabidopsis</taxon>
    </lineage>
</organism>
<protein>
    <recommendedName>
        <fullName>Callose synthase 2</fullName>
        <ecNumber>2.4.1.34</ecNumber>
    </recommendedName>
    <alternativeName>
        <fullName>1,3-beta-glucan synthase</fullName>
    </alternativeName>
    <alternativeName>
        <fullName>Protein GLUCAN SYNTHASE-LIKE 3</fullName>
    </alternativeName>
</protein>
<accession>Q9SL03</accession>
<accession>F4IRV4</accession>
<accession>Q8GYW2</accession>
<proteinExistence type="evidence at transcript level"/>
<keyword id="KW-1003">Cell membrane</keyword>
<keyword id="KW-0133">Cell shape</keyword>
<keyword id="KW-0961">Cell wall biogenesis/degradation</keyword>
<keyword id="KW-0328">Glycosyltransferase</keyword>
<keyword id="KW-0472">Membrane</keyword>
<keyword id="KW-1185">Reference proteome</keyword>
<keyword id="KW-0808">Transferase</keyword>
<keyword id="KW-0812">Transmembrane</keyword>
<keyword id="KW-1133">Transmembrane helix</keyword>
<dbReference type="EC" id="2.4.1.34"/>
<dbReference type="EMBL" id="AC006223">
    <property type="protein sequence ID" value="AAD15408.1"/>
    <property type="status" value="ALT_SEQ"/>
    <property type="molecule type" value="Genomic_DNA"/>
</dbReference>
<dbReference type="EMBL" id="CP002685">
    <property type="protein sequence ID" value="AEC08612.1"/>
    <property type="molecule type" value="Genomic_DNA"/>
</dbReference>
<dbReference type="EMBL" id="CP002685">
    <property type="protein sequence ID" value="AEC08613.1"/>
    <property type="molecule type" value="Genomic_DNA"/>
</dbReference>
<dbReference type="EMBL" id="CP002685">
    <property type="protein sequence ID" value="ANM61514.1"/>
    <property type="molecule type" value="Genomic_DNA"/>
</dbReference>
<dbReference type="EMBL" id="CP002685">
    <property type="protein sequence ID" value="ANM61516.1"/>
    <property type="molecule type" value="Genomic_DNA"/>
</dbReference>
<dbReference type="EMBL" id="AK117353">
    <property type="protein sequence ID" value="BAC42023.1"/>
    <property type="status" value="ALT_INIT"/>
    <property type="molecule type" value="mRNA"/>
</dbReference>
<dbReference type="PIR" id="C84727">
    <property type="entry name" value="C84727"/>
</dbReference>
<dbReference type="RefSeq" id="NP_001189653.1">
    <property type="nucleotide sequence ID" value="NM_001202724.2"/>
</dbReference>
<dbReference type="RefSeq" id="NP_001318331.1">
    <property type="nucleotide sequence ID" value="NM_001336361.1"/>
</dbReference>
<dbReference type="RefSeq" id="NP_001323731.1">
    <property type="nucleotide sequence ID" value="NM_001336363.1"/>
</dbReference>
<dbReference type="RefSeq" id="NP_850178.2">
    <property type="nucleotide sequence ID" value="NM_179847.3"/>
</dbReference>
<dbReference type="SMR" id="Q9SL03"/>
<dbReference type="FunCoup" id="Q9SL03">
    <property type="interactions" value="1085"/>
</dbReference>
<dbReference type="STRING" id="3702.Q9SL03"/>
<dbReference type="CAZy" id="GT48">
    <property type="family name" value="Glycosyltransferase Family 48"/>
</dbReference>
<dbReference type="iPTMnet" id="Q9SL03"/>
<dbReference type="PaxDb" id="3702-AT2G31960.2"/>
<dbReference type="ProteomicsDB" id="239184"/>
<dbReference type="EnsemblPlants" id="AT2G31960.1">
    <property type="protein sequence ID" value="AT2G31960.1"/>
    <property type="gene ID" value="AT2G31960"/>
</dbReference>
<dbReference type="EnsemblPlants" id="AT2G31960.2">
    <property type="protein sequence ID" value="AT2G31960.2"/>
    <property type="gene ID" value="AT2G31960"/>
</dbReference>
<dbReference type="EnsemblPlants" id="AT2G31960.3">
    <property type="protein sequence ID" value="AT2G31960.3"/>
    <property type="gene ID" value="AT2G31960"/>
</dbReference>
<dbReference type="EnsemblPlants" id="AT2G31960.5">
    <property type="protein sequence ID" value="AT2G31960.5"/>
    <property type="gene ID" value="AT2G31960"/>
</dbReference>
<dbReference type="GeneID" id="817755"/>
<dbReference type="Gramene" id="AT2G31960.1">
    <property type="protein sequence ID" value="AT2G31960.1"/>
    <property type="gene ID" value="AT2G31960"/>
</dbReference>
<dbReference type="Gramene" id="AT2G31960.2">
    <property type="protein sequence ID" value="AT2G31960.2"/>
    <property type="gene ID" value="AT2G31960"/>
</dbReference>
<dbReference type="Gramene" id="AT2G31960.3">
    <property type="protein sequence ID" value="AT2G31960.3"/>
    <property type="gene ID" value="AT2G31960"/>
</dbReference>
<dbReference type="Gramene" id="AT2G31960.5">
    <property type="protein sequence ID" value="AT2G31960.5"/>
    <property type="gene ID" value="AT2G31960"/>
</dbReference>
<dbReference type="KEGG" id="ath:AT2G31960"/>
<dbReference type="Araport" id="AT2G31960"/>
<dbReference type="TAIR" id="AT2G31960">
    <property type="gene designation" value="GSL03"/>
</dbReference>
<dbReference type="eggNOG" id="KOG0916">
    <property type="taxonomic scope" value="Eukaryota"/>
</dbReference>
<dbReference type="HOGENOM" id="CLU_000742_0_0_1"/>
<dbReference type="InParanoid" id="Q9SL03"/>
<dbReference type="OrthoDB" id="1880850at2759"/>
<dbReference type="BioCyc" id="ARA:AT2G31960-MONOMER"/>
<dbReference type="PRO" id="PR:Q9SL03"/>
<dbReference type="Proteomes" id="UP000006548">
    <property type="component" value="Chromosome 2"/>
</dbReference>
<dbReference type="ExpressionAtlas" id="Q9SL03">
    <property type="expression patterns" value="baseline and differential"/>
</dbReference>
<dbReference type="GO" id="GO:0000148">
    <property type="term" value="C:1,3-beta-D-glucan synthase complex"/>
    <property type="evidence" value="ECO:0007669"/>
    <property type="project" value="InterPro"/>
</dbReference>
<dbReference type="GO" id="GO:0005886">
    <property type="term" value="C:plasma membrane"/>
    <property type="evidence" value="ECO:0007669"/>
    <property type="project" value="UniProtKB-SubCell"/>
</dbReference>
<dbReference type="GO" id="GO:0003843">
    <property type="term" value="F:1,3-beta-D-glucan synthase activity"/>
    <property type="evidence" value="ECO:0007669"/>
    <property type="project" value="UniProtKB-EC"/>
</dbReference>
<dbReference type="GO" id="GO:0006075">
    <property type="term" value="P:(1-&gt;3)-beta-D-glucan biosynthetic process"/>
    <property type="evidence" value="ECO:0007669"/>
    <property type="project" value="InterPro"/>
</dbReference>
<dbReference type="GO" id="GO:0071555">
    <property type="term" value="P:cell wall organization"/>
    <property type="evidence" value="ECO:0007669"/>
    <property type="project" value="UniProtKB-KW"/>
</dbReference>
<dbReference type="GO" id="GO:0008360">
    <property type="term" value="P:regulation of cell shape"/>
    <property type="evidence" value="ECO:0007669"/>
    <property type="project" value="UniProtKB-KW"/>
</dbReference>
<dbReference type="FunFam" id="1.25.40.270:FF:000002">
    <property type="entry name" value="callose synthase 3"/>
    <property type="match status" value="1"/>
</dbReference>
<dbReference type="Gene3D" id="1.25.40.270">
    <property type="entry name" value="Vacuolar protein sorting-associated protein vta1"/>
    <property type="match status" value="1"/>
</dbReference>
<dbReference type="InterPro" id="IPR026899">
    <property type="entry name" value="FKS1-like_dom1"/>
</dbReference>
<dbReference type="InterPro" id="IPR003440">
    <property type="entry name" value="Glyco_trans_48_dom"/>
</dbReference>
<dbReference type="InterPro" id="IPR039431">
    <property type="entry name" value="Vta1/CALS_N"/>
</dbReference>
<dbReference type="InterPro" id="IPR023175">
    <property type="entry name" value="Vta1/CALS_N_sf"/>
</dbReference>
<dbReference type="PANTHER" id="PTHR12741:SF70">
    <property type="entry name" value="CALLOSE SYNTHASE 2-RELATED"/>
    <property type="match status" value="1"/>
</dbReference>
<dbReference type="PANTHER" id="PTHR12741">
    <property type="entry name" value="LYST-INTERACTING PROTEIN LIP5 DOPAMINE RESPONSIVE PROTEIN DRG-1"/>
    <property type="match status" value="1"/>
</dbReference>
<dbReference type="Pfam" id="PF14288">
    <property type="entry name" value="FKS1_dom1"/>
    <property type="match status" value="1"/>
</dbReference>
<dbReference type="Pfam" id="PF02364">
    <property type="entry name" value="Glucan_synthase"/>
    <property type="match status" value="2"/>
</dbReference>
<dbReference type="Pfam" id="PF04652">
    <property type="entry name" value="Vta1"/>
    <property type="match status" value="1"/>
</dbReference>
<dbReference type="SMART" id="SM01205">
    <property type="entry name" value="FKS1_dom1"/>
    <property type="match status" value="1"/>
</dbReference>